<keyword id="KW-1185">Reference proteome</keyword>
<keyword id="KW-0687">Ribonucleoprotein</keyword>
<keyword id="KW-0689">Ribosomal protein</keyword>
<keyword id="KW-0694">RNA-binding</keyword>
<keyword id="KW-0699">rRNA-binding</keyword>
<protein>
    <recommendedName>
        <fullName evidence="1">Large ribosomal subunit protein uL2</fullName>
    </recommendedName>
    <alternativeName>
        <fullName evidence="3">50S ribosomal protein L2</fullName>
    </alternativeName>
</protein>
<sequence length="277" mass="30137">MAVRGFKPTSPARRQMTVSTFEEITTDVPEKSLLVSLNNKAGRNNNGKITVRHRGGGNRNKYRLIDFKRNKDGVPAKVTTIEYDPNRSAYIALVVYADGEKRYIIAPTKLSVGDTVVSGPDADIKIGNALPIKNIPVGTVIHNVELAAGKGAQLVRAAGSSAQLMAKEGNYAQLRLPSGEMRYVRIECRATIGTVSNLTHDIVNIGKAGRKRHMGIRPTVRGSVMNPNDHPHGGGEGKSPVGRPGPVTPWGKPALGYKTRKNKKYSDKLIVKRRNDK</sequence>
<reference key="1">
    <citation type="journal article" date="2001" name="J. Bacteriol.">
        <title>Genome sequence and comparative analysis of the solvent-producing bacterium Clostridium acetobutylicum.</title>
        <authorList>
            <person name="Noelling J."/>
            <person name="Breton G."/>
            <person name="Omelchenko M.V."/>
            <person name="Makarova K.S."/>
            <person name="Zeng Q."/>
            <person name="Gibson R."/>
            <person name="Lee H.M."/>
            <person name="Dubois J."/>
            <person name="Qiu D."/>
            <person name="Hitti J."/>
            <person name="Wolf Y.I."/>
            <person name="Tatusov R.L."/>
            <person name="Sabathe F."/>
            <person name="Doucette-Stamm L.A."/>
            <person name="Soucaille P."/>
            <person name="Daly M.J."/>
            <person name="Bennett G.N."/>
            <person name="Koonin E.V."/>
            <person name="Smith D.R."/>
        </authorList>
    </citation>
    <scope>NUCLEOTIDE SEQUENCE [LARGE SCALE GENOMIC DNA]</scope>
    <source>
        <strain>ATCC 824 / DSM 792 / JCM 1419 / IAM 19013 / LMG 5710 / NBRC 13948 / NRRL B-527 / VKM B-1787 / 2291 / W</strain>
    </source>
</reference>
<proteinExistence type="inferred from homology"/>
<gene>
    <name evidence="1" type="primary">rplB</name>
    <name type="ordered locus">CA_C3130</name>
</gene>
<name>RL2_CLOAB</name>
<dbReference type="EMBL" id="AE001437">
    <property type="protein sequence ID" value="AAK81069.1"/>
    <property type="molecule type" value="Genomic_DNA"/>
</dbReference>
<dbReference type="PIR" id="B97285">
    <property type="entry name" value="B97285"/>
</dbReference>
<dbReference type="RefSeq" id="NP_349729.1">
    <property type="nucleotide sequence ID" value="NC_003030.1"/>
</dbReference>
<dbReference type="RefSeq" id="WP_010966409.1">
    <property type="nucleotide sequence ID" value="NC_003030.1"/>
</dbReference>
<dbReference type="SMR" id="Q97EI1"/>
<dbReference type="STRING" id="272562.CA_C3130"/>
<dbReference type="GeneID" id="44999617"/>
<dbReference type="KEGG" id="cac:CA_C3130"/>
<dbReference type="PATRIC" id="fig|272562.8.peg.3313"/>
<dbReference type="eggNOG" id="COG0090">
    <property type="taxonomic scope" value="Bacteria"/>
</dbReference>
<dbReference type="HOGENOM" id="CLU_036235_2_1_9"/>
<dbReference type="OrthoDB" id="9778722at2"/>
<dbReference type="Proteomes" id="UP000000814">
    <property type="component" value="Chromosome"/>
</dbReference>
<dbReference type="GO" id="GO:0015934">
    <property type="term" value="C:large ribosomal subunit"/>
    <property type="evidence" value="ECO:0007669"/>
    <property type="project" value="InterPro"/>
</dbReference>
<dbReference type="GO" id="GO:0019843">
    <property type="term" value="F:rRNA binding"/>
    <property type="evidence" value="ECO:0007669"/>
    <property type="project" value="UniProtKB-UniRule"/>
</dbReference>
<dbReference type="GO" id="GO:0003735">
    <property type="term" value="F:structural constituent of ribosome"/>
    <property type="evidence" value="ECO:0007669"/>
    <property type="project" value="InterPro"/>
</dbReference>
<dbReference type="GO" id="GO:0016740">
    <property type="term" value="F:transferase activity"/>
    <property type="evidence" value="ECO:0007669"/>
    <property type="project" value="InterPro"/>
</dbReference>
<dbReference type="GO" id="GO:0002181">
    <property type="term" value="P:cytoplasmic translation"/>
    <property type="evidence" value="ECO:0007669"/>
    <property type="project" value="TreeGrafter"/>
</dbReference>
<dbReference type="FunFam" id="2.30.30.30:FF:000001">
    <property type="entry name" value="50S ribosomal protein L2"/>
    <property type="match status" value="1"/>
</dbReference>
<dbReference type="FunFam" id="2.40.50.140:FF:000003">
    <property type="entry name" value="50S ribosomal protein L2"/>
    <property type="match status" value="1"/>
</dbReference>
<dbReference type="FunFam" id="4.10.950.10:FF:000001">
    <property type="entry name" value="50S ribosomal protein L2"/>
    <property type="match status" value="1"/>
</dbReference>
<dbReference type="Gene3D" id="2.30.30.30">
    <property type="match status" value="1"/>
</dbReference>
<dbReference type="Gene3D" id="2.40.50.140">
    <property type="entry name" value="Nucleic acid-binding proteins"/>
    <property type="match status" value="1"/>
</dbReference>
<dbReference type="Gene3D" id="4.10.950.10">
    <property type="entry name" value="Ribosomal protein L2, domain 3"/>
    <property type="match status" value="1"/>
</dbReference>
<dbReference type="HAMAP" id="MF_01320_B">
    <property type="entry name" value="Ribosomal_uL2_B"/>
    <property type="match status" value="1"/>
</dbReference>
<dbReference type="InterPro" id="IPR012340">
    <property type="entry name" value="NA-bd_OB-fold"/>
</dbReference>
<dbReference type="InterPro" id="IPR014722">
    <property type="entry name" value="Rib_uL2_dom2"/>
</dbReference>
<dbReference type="InterPro" id="IPR002171">
    <property type="entry name" value="Ribosomal_uL2"/>
</dbReference>
<dbReference type="InterPro" id="IPR005880">
    <property type="entry name" value="Ribosomal_uL2_bac/org-type"/>
</dbReference>
<dbReference type="InterPro" id="IPR022669">
    <property type="entry name" value="Ribosomal_uL2_C"/>
</dbReference>
<dbReference type="InterPro" id="IPR022671">
    <property type="entry name" value="Ribosomal_uL2_CS"/>
</dbReference>
<dbReference type="InterPro" id="IPR014726">
    <property type="entry name" value="Ribosomal_uL2_dom3"/>
</dbReference>
<dbReference type="InterPro" id="IPR022666">
    <property type="entry name" value="Ribosomal_uL2_RNA-bd_dom"/>
</dbReference>
<dbReference type="InterPro" id="IPR008991">
    <property type="entry name" value="Translation_prot_SH3-like_sf"/>
</dbReference>
<dbReference type="NCBIfam" id="TIGR01171">
    <property type="entry name" value="rplB_bact"/>
    <property type="match status" value="1"/>
</dbReference>
<dbReference type="PANTHER" id="PTHR13691:SF5">
    <property type="entry name" value="LARGE RIBOSOMAL SUBUNIT PROTEIN UL2M"/>
    <property type="match status" value="1"/>
</dbReference>
<dbReference type="PANTHER" id="PTHR13691">
    <property type="entry name" value="RIBOSOMAL PROTEIN L2"/>
    <property type="match status" value="1"/>
</dbReference>
<dbReference type="Pfam" id="PF00181">
    <property type="entry name" value="Ribosomal_L2"/>
    <property type="match status" value="1"/>
</dbReference>
<dbReference type="Pfam" id="PF03947">
    <property type="entry name" value="Ribosomal_L2_C"/>
    <property type="match status" value="1"/>
</dbReference>
<dbReference type="PIRSF" id="PIRSF002158">
    <property type="entry name" value="Ribosomal_L2"/>
    <property type="match status" value="1"/>
</dbReference>
<dbReference type="SMART" id="SM01383">
    <property type="entry name" value="Ribosomal_L2"/>
    <property type="match status" value="1"/>
</dbReference>
<dbReference type="SMART" id="SM01382">
    <property type="entry name" value="Ribosomal_L2_C"/>
    <property type="match status" value="1"/>
</dbReference>
<dbReference type="SUPFAM" id="SSF50249">
    <property type="entry name" value="Nucleic acid-binding proteins"/>
    <property type="match status" value="1"/>
</dbReference>
<dbReference type="SUPFAM" id="SSF50104">
    <property type="entry name" value="Translation proteins SH3-like domain"/>
    <property type="match status" value="1"/>
</dbReference>
<dbReference type="PROSITE" id="PS00467">
    <property type="entry name" value="RIBOSOMAL_L2"/>
    <property type="match status" value="1"/>
</dbReference>
<comment type="function">
    <text evidence="1">One of the primary rRNA binding proteins. Required for association of the 30S and 50S subunits to form the 70S ribosome, for tRNA binding and peptide bond formation. It has been suggested to have peptidyltransferase activity; this is somewhat controversial. Makes several contacts with the 16S rRNA in the 70S ribosome.</text>
</comment>
<comment type="subunit">
    <text evidence="1">Part of the 50S ribosomal subunit. Forms a bridge to the 30S subunit in the 70S ribosome.</text>
</comment>
<comment type="similarity">
    <text evidence="1">Belongs to the universal ribosomal protein uL2 family.</text>
</comment>
<organism>
    <name type="scientific">Clostridium acetobutylicum (strain ATCC 824 / DSM 792 / JCM 1419 / IAM 19013 / LMG 5710 / NBRC 13948 / NRRL B-527 / VKM B-1787 / 2291 / W)</name>
    <dbReference type="NCBI Taxonomy" id="272562"/>
    <lineage>
        <taxon>Bacteria</taxon>
        <taxon>Bacillati</taxon>
        <taxon>Bacillota</taxon>
        <taxon>Clostridia</taxon>
        <taxon>Eubacteriales</taxon>
        <taxon>Clostridiaceae</taxon>
        <taxon>Clostridium</taxon>
    </lineage>
</organism>
<accession>Q97EI1</accession>
<feature type="chain" id="PRO_0000129551" description="Large ribosomal subunit protein uL2">
    <location>
        <begin position="1"/>
        <end position="277"/>
    </location>
</feature>
<feature type="region of interest" description="Disordered" evidence="2">
    <location>
        <begin position="215"/>
        <end position="277"/>
    </location>
</feature>
<feature type="compositionally biased region" description="Basic and acidic residues" evidence="2">
    <location>
        <begin position="264"/>
        <end position="277"/>
    </location>
</feature>
<evidence type="ECO:0000255" key="1">
    <source>
        <dbReference type="HAMAP-Rule" id="MF_01320"/>
    </source>
</evidence>
<evidence type="ECO:0000256" key="2">
    <source>
        <dbReference type="SAM" id="MobiDB-lite"/>
    </source>
</evidence>
<evidence type="ECO:0000305" key="3"/>